<name>GUAA_STRA5</name>
<gene>
    <name evidence="1" type="primary">guaA</name>
    <name type="ordered locus">SAG0967</name>
</gene>
<sequence>MTDISILNDIQKIIVLDYGSQYNQLIARRIREFGVFSELKSHKITADEIRDINPIGIVLSGGPNSVYADGAFGIDEEIFELGIPILGICYGMQLITHKLGGKVLPAGEAGHREYGQSALRLRSESALFAGTPQEQLVLMSHGDAVTEIPEGFHLVGDSVDCPFAAMENTEKQFYGIQFHPEVRHSVYGNDILKNFAVNICGARGDWSMDNFIDMEIAKIRETVGDRKVLLGLSGGVDSSVVGVLLQRAIGDQLTCIFVDHGLLRKNEGDQVMDMLGGKFGLNIIRVDASKRFLDLLSGVEDPERKRKIIGNEFVYVFDDEASKLKGVDFLAQGTLYTDIIESGTETAQTIKSHHNVGGLPEDMQFELIEPLNTLFKDEVRALGTALGMPDEVVWRQPFPGPGLAIRVMGEITEEKLETVRESDAILREEIAKAGLDRDVWQYFTVNTGVRSVGVMGDGRTYDYTIAIRAITSIDGMTADFAQLPWDVLKKISTRIVNEVDHVNRIVYDITSKPPATVEWE</sequence>
<accession>Q8DZX7</accession>
<dbReference type="EC" id="6.3.5.2" evidence="1"/>
<dbReference type="EMBL" id="AE009948">
    <property type="protein sequence ID" value="AAM99851.1"/>
    <property type="molecule type" value="Genomic_DNA"/>
</dbReference>
<dbReference type="RefSeq" id="NP_687979.1">
    <property type="nucleotide sequence ID" value="NC_004116.1"/>
</dbReference>
<dbReference type="RefSeq" id="WP_000129872.1">
    <property type="nucleotide sequence ID" value="NC_004116.1"/>
</dbReference>
<dbReference type="SMR" id="Q8DZX7"/>
<dbReference type="STRING" id="208435.SAG0967"/>
<dbReference type="MEROPS" id="C26.957"/>
<dbReference type="KEGG" id="sag:SAG0967"/>
<dbReference type="PATRIC" id="fig|208435.3.peg.973"/>
<dbReference type="HOGENOM" id="CLU_014340_0_5_9"/>
<dbReference type="OrthoDB" id="9802219at2"/>
<dbReference type="UniPathway" id="UPA00189">
    <property type="reaction ID" value="UER00296"/>
</dbReference>
<dbReference type="Proteomes" id="UP000000821">
    <property type="component" value="Chromosome"/>
</dbReference>
<dbReference type="GO" id="GO:0005829">
    <property type="term" value="C:cytosol"/>
    <property type="evidence" value="ECO:0007669"/>
    <property type="project" value="TreeGrafter"/>
</dbReference>
<dbReference type="GO" id="GO:0005524">
    <property type="term" value="F:ATP binding"/>
    <property type="evidence" value="ECO:0007669"/>
    <property type="project" value="UniProtKB-UniRule"/>
</dbReference>
<dbReference type="GO" id="GO:0003921">
    <property type="term" value="F:GMP synthase activity"/>
    <property type="evidence" value="ECO:0007669"/>
    <property type="project" value="InterPro"/>
</dbReference>
<dbReference type="CDD" id="cd01742">
    <property type="entry name" value="GATase1_GMP_Synthase"/>
    <property type="match status" value="1"/>
</dbReference>
<dbReference type="CDD" id="cd01997">
    <property type="entry name" value="GMP_synthase_C"/>
    <property type="match status" value="1"/>
</dbReference>
<dbReference type="FunFam" id="3.30.300.10:FF:000002">
    <property type="entry name" value="GMP synthase [glutamine-hydrolyzing]"/>
    <property type="match status" value="1"/>
</dbReference>
<dbReference type="FunFam" id="3.40.50.620:FF:000001">
    <property type="entry name" value="GMP synthase [glutamine-hydrolyzing]"/>
    <property type="match status" value="1"/>
</dbReference>
<dbReference type="FunFam" id="3.40.50.880:FF:000001">
    <property type="entry name" value="GMP synthase [glutamine-hydrolyzing]"/>
    <property type="match status" value="1"/>
</dbReference>
<dbReference type="Gene3D" id="3.30.300.10">
    <property type="match status" value="1"/>
</dbReference>
<dbReference type="Gene3D" id="3.40.50.880">
    <property type="match status" value="1"/>
</dbReference>
<dbReference type="Gene3D" id="3.40.50.620">
    <property type="entry name" value="HUPs"/>
    <property type="match status" value="1"/>
</dbReference>
<dbReference type="HAMAP" id="MF_00344">
    <property type="entry name" value="GMP_synthase"/>
    <property type="match status" value="1"/>
</dbReference>
<dbReference type="InterPro" id="IPR029062">
    <property type="entry name" value="Class_I_gatase-like"/>
</dbReference>
<dbReference type="InterPro" id="IPR017926">
    <property type="entry name" value="GATASE"/>
</dbReference>
<dbReference type="InterPro" id="IPR001674">
    <property type="entry name" value="GMP_synth_C"/>
</dbReference>
<dbReference type="InterPro" id="IPR004739">
    <property type="entry name" value="GMP_synth_GATase"/>
</dbReference>
<dbReference type="InterPro" id="IPR022955">
    <property type="entry name" value="GMP_synthase"/>
</dbReference>
<dbReference type="InterPro" id="IPR025777">
    <property type="entry name" value="GMPS_ATP_PPase_dom"/>
</dbReference>
<dbReference type="InterPro" id="IPR022310">
    <property type="entry name" value="NAD/GMP_synthase"/>
</dbReference>
<dbReference type="InterPro" id="IPR014729">
    <property type="entry name" value="Rossmann-like_a/b/a_fold"/>
</dbReference>
<dbReference type="NCBIfam" id="TIGR00884">
    <property type="entry name" value="guaA_Cterm"/>
    <property type="match status" value="1"/>
</dbReference>
<dbReference type="NCBIfam" id="TIGR00888">
    <property type="entry name" value="guaA_Nterm"/>
    <property type="match status" value="1"/>
</dbReference>
<dbReference type="NCBIfam" id="NF000848">
    <property type="entry name" value="PRK00074.1"/>
    <property type="match status" value="1"/>
</dbReference>
<dbReference type="PANTHER" id="PTHR11922:SF2">
    <property type="entry name" value="GMP SYNTHASE [GLUTAMINE-HYDROLYZING]"/>
    <property type="match status" value="1"/>
</dbReference>
<dbReference type="PANTHER" id="PTHR11922">
    <property type="entry name" value="GMP SYNTHASE-RELATED"/>
    <property type="match status" value="1"/>
</dbReference>
<dbReference type="Pfam" id="PF00117">
    <property type="entry name" value="GATase"/>
    <property type="match status" value="1"/>
</dbReference>
<dbReference type="Pfam" id="PF00958">
    <property type="entry name" value="GMP_synt_C"/>
    <property type="match status" value="1"/>
</dbReference>
<dbReference type="Pfam" id="PF02540">
    <property type="entry name" value="NAD_synthase"/>
    <property type="match status" value="1"/>
</dbReference>
<dbReference type="PRINTS" id="PR00097">
    <property type="entry name" value="ANTSNTHASEII"/>
</dbReference>
<dbReference type="PRINTS" id="PR00099">
    <property type="entry name" value="CPSGATASE"/>
</dbReference>
<dbReference type="PRINTS" id="PR00096">
    <property type="entry name" value="GATASE"/>
</dbReference>
<dbReference type="SUPFAM" id="SSF52402">
    <property type="entry name" value="Adenine nucleotide alpha hydrolases-like"/>
    <property type="match status" value="1"/>
</dbReference>
<dbReference type="SUPFAM" id="SSF52317">
    <property type="entry name" value="Class I glutamine amidotransferase-like"/>
    <property type="match status" value="1"/>
</dbReference>
<dbReference type="SUPFAM" id="SSF54810">
    <property type="entry name" value="GMP synthetase C-terminal dimerisation domain"/>
    <property type="match status" value="1"/>
</dbReference>
<dbReference type="PROSITE" id="PS51273">
    <property type="entry name" value="GATASE_TYPE_1"/>
    <property type="match status" value="1"/>
</dbReference>
<dbReference type="PROSITE" id="PS51553">
    <property type="entry name" value="GMPS_ATP_PPASE"/>
    <property type="match status" value="1"/>
</dbReference>
<reference key="1">
    <citation type="journal article" date="2002" name="Proc. Natl. Acad. Sci. U.S.A.">
        <title>Complete genome sequence and comparative genomic analysis of an emerging human pathogen, serotype V Streptococcus agalactiae.</title>
        <authorList>
            <person name="Tettelin H."/>
            <person name="Masignani V."/>
            <person name="Cieslewicz M.J."/>
            <person name="Eisen J.A."/>
            <person name="Peterson S.N."/>
            <person name="Wessels M.R."/>
            <person name="Paulsen I.T."/>
            <person name="Nelson K.E."/>
            <person name="Margarit I."/>
            <person name="Read T.D."/>
            <person name="Madoff L.C."/>
            <person name="Wolf A.M."/>
            <person name="Beanan M.J."/>
            <person name="Brinkac L.M."/>
            <person name="Daugherty S.C."/>
            <person name="DeBoy R.T."/>
            <person name="Durkin A.S."/>
            <person name="Kolonay J.F."/>
            <person name="Madupu R."/>
            <person name="Lewis M.R."/>
            <person name="Radune D."/>
            <person name="Fedorova N.B."/>
            <person name="Scanlan D."/>
            <person name="Khouri H.M."/>
            <person name="Mulligan S."/>
            <person name="Carty H.A."/>
            <person name="Cline R.T."/>
            <person name="Van Aken S.E."/>
            <person name="Gill J."/>
            <person name="Scarselli M."/>
            <person name="Mora M."/>
            <person name="Iacobini E.T."/>
            <person name="Brettoni C."/>
            <person name="Galli G."/>
            <person name="Mariani M."/>
            <person name="Vegni F."/>
            <person name="Maione D."/>
            <person name="Rinaudo D."/>
            <person name="Rappuoli R."/>
            <person name="Telford J.L."/>
            <person name="Kasper D.L."/>
            <person name="Grandi G."/>
            <person name="Fraser C.M."/>
        </authorList>
    </citation>
    <scope>NUCLEOTIDE SEQUENCE [LARGE SCALE GENOMIC DNA]</scope>
    <source>
        <strain>ATCC BAA-611 / 2603 V/R</strain>
    </source>
</reference>
<evidence type="ECO:0000255" key="1">
    <source>
        <dbReference type="HAMAP-Rule" id="MF_00344"/>
    </source>
</evidence>
<proteinExistence type="inferred from homology"/>
<organism>
    <name type="scientific">Streptococcus agalactiae serotype V (strain ATCC BAA-611 / 2603 V/R)</name>
    <dbReference type="NCBI Taxonomy" id="208435"/>
    <lineage>
        <taxon>Bacteria</taxon>
        <taxon>Bacillati</taxon>
        <taxon>Bacillota</taxon>
        <taxon>Bacilli</taxon>
        <taxon>Lactobacillales</taxon>
        <taxon>Streptococcaceae</taxon>
        <taxon>Streptococcus</taxon>
    </lineage>
</organism>
<protein>
    <recommendedName>
        <fullName evidence="1">GMP synthase [glutamine-hydrolyzing]</fullName>
        <ecNumber evidence="1">6.3.5.2</ecNumber>
    </recommendedName>
    <alternativeName>
        <fullName evidence="1">GMP synthetase</fullName>
    </alternativeName>
    <alternativeName>
        <fullName evidence="1">Glutamine amidotransferase</fullName>
    </alternativeName>
</protein>
<feature type="chain" id="PRO_0000140184" description="GMP synthase [glutamine-hydrolyzing]">
    <location>
        <begin position="1"/>
        <end position="520"/>
    </location>
</feature>
<feature type="domain" description="Glutamine amidotransferase type-1" evidence="1">
    <location>
        <begin position="12"/>
        <end position="205"/>
    </location>
</feature>
<feature type="domain" description="GMPS ATP-PPase" evidence="1">
    <location>
        <begin position="206"/>
        <end position="395"/>
    </location>
</feature>
<feature type="active site" description="Nucleophile" evidence="1">
    <location>
        <position position="89"/>
    </location>
</feature>
<feature type="active site" evidence="1">
    <location>
        <position position="179"/>
    </location>
</feature>
<feature type="active site" evidence="1">
    <location>
        <position position="181"/>
    </location>
</feature>
<feature type="binding site" evidence="1">
    <location>
        <begin position="233"/>
        <end position="239"/>
    </location>
    <ligand>
        <name>ATP</name>
        <dbReference type="ChEBI" id="CHEBI:30616"/>
    </ligand>
</feature>
<keyword id="KW-0067">ATP-binding</keyword>
<keyword id="KW-0315">Glutamine amidotransferase</keyword>
<keyword id="KW-0332">GMP biosynthesis</keyword>
<keyword id="KW-0436">Ligase</keyword>
<keyword id="KW-0547">Nucleotide-binding</keyword>
<keyword id="KW-0658">Purine biosynthesis</keyword>
<keyword id="KW-1185">Reference proteome</keyword>
<comment type="function">
    <text evidence="1">Catalyzes the synthesis of GMP from XMP.</text>
</comment>
<comment type="catalytic activity">
    <reaction evidence="1">
        <text>XMP + L-glutamine + ATP + H2O = GMP + L-glutamate + AMP + diphosphate + 2 H(+)</text>
        <dbReference type="Rhea" id="RHEA:11680"/>
        <dbReference type="ChEBI" id="CHEBI:15377"/>
        <dbReference type="ChEBI" id="CHEBI:15378"/>
        <dbReference type="ChEBI" id="CHEBI:29985"/>
        <dbReference type="ChEBI" id="CHEBI:30616"/>
        <dbReference type="ChEBI" id="CHEBI:33019"/>
        <dbReference type="ChEBI" id="CHEBI:57464"/>
        <dbReference type="ChEBI" id="CHEBI:58115"/>
        <dbReference type="ChEBI" id="CHEBI:58359"/>
        <dbReference type="ChEBI" id="CHEBI:456215"/>
        <dbReference type="EC" id="6.3.5.2"/>
    </reaction>
</comment>
<comment type="pathway">
    <text evidence="1">Purine metabolism; GMP biosynthesis; GMP from XMP (L-Gln route): step 1/1.</text>
</comment>
<comment type="subunit">
    <text evidence="1">Homodimer.</text>
</comment>